<sequence>MTVRVRIAPSPTGNLHIGTARTAVFNWLFARHHRGKFILRVEDTDLERSRPEYTENIQAGLQWLGLNWDEGPFFQTQRLNYYRQAIQTLLDRGLAYRCYCTPEELEKMREEQKARNLAPRYDNRHRYLTPEQQAQFEQAGRKAVIRFIIDDDQEIIWQDLIREKVIWKGSDLGGDMVIARTSENGEENFGQPLYNLAVVVDDIDMEITHVIRGEDHIANTAKQILLYEALGAKVPEFAHSPLILNQEGRKLSKRDGVTSIDDFRKLGFLPQALVNYMTLLGWTPPDSTEEIFTLEAAAEVFSLERVNKAGAKFDWTKLDWINSQYLHRLTGEELVPLLLPYWQEAGYNFAAETDRAWLIGLATLIGPSLTRLSDAVAESRLLLTPLANYNQEALSQLQLEGVKDIIKDILAAITPDLTGEVAKGIVETTTKAHRVKKGLVMKSLRAALMGELHGPDLMQSWLLLNQKGWDISRLQQAVNS</sequence>
<comment type="function">
    <text evidence="1">Catalyzes the attachment of glutamate to tRNA(Glu) in a two-step reaction: glutamate is first activated by ATP to form Glu-AMP and then transferred to the acceptor end of tRNA(Glu).</text>
</comment>
<comment type="catalytic activity">
    <reaction evidence="1">
        <text>tRNA(Glu) + L-glutamate + ATP = L-glutamyl-tRNA(Glu) + AMP + diphosphate</text>
        <dbReference type="Rhea" id="RHEA:23540"/>
        <dbReference type="Rhea" id="RHEA-COMP:9663"/>
        <dbReference type="Rhea" id="RHEA-COMP:9680"/>
        <dbReference type="ChEBI" id="CHEBI:29985"/>
        <dbReference type="ChEBI" id="CHEBI:30616"/>
        <dbReference type="ChEBI" id="CHEBI:33019"/>
        <dbReference type="ChEBI" id="CHEBI:78442"/>
        <dbReference type="ChEBI" id="CHEBI:78520"/>
        <dbReference type="ChEBI" id="CHEBI:456215"/>
        <dbReference type="EC" id="6.1.1.17"/>
    </reaction>
</comment>
<comment type="subunit">
    <text evidence="1">Monomer.</text>
</comment>
<comment type="subcellular location">
    <subcellularLocation>
        <location evidence="1">Cytoplasm</location>
    </subcellularLocation>
</comment>
<comment type="similarity">
    <text evidence="1">Belongs to the class-I aminoacyl-tRNA synthetase family. Glutamate--tRNA ligase type 1 subfamily.</text>
</comment>
<gene>
    <name evidence="1" type="primary">gltX</name>
    <name type="ordered locus">MAE_52690</name>
</gene>
<organism>
    <name type="scientific">Microcystis aeruginosa (strain NIES-843 / IAM M-2473)</name>
    <dbReference type="NCBI Taxonomy" id="449447"/>
    <lineage>
        <taxon>Bacteria</taxon>
        <taxon>Bacillati</taxon>
        <taxon>Cyanobacteriota</taxon>
        <taxon>Cyanophyceae</taxon>
        <taxon>Oscillatoriophycideae</taxon>
        <taxon>Chroococcales</taxon>
        <taxon>Microcystaceae</taxon>
        <taxon>Microcystis</taxon>
    </lineage>
</organism>
<name>SYE_MICAN</name>
<protein>
    <recommendedName>
        <fullName evidence="1">Glutamate--tRNA ligase</fullName>
        <ecNumber evidence="1">6.1.1.17</ecNumber>
    </recommendedName>
    <alternativeName>
        <fullName evidence="1">Glutamyl-tRNA synthetase</fullName>
        <shortName evidence="1">GluRS</shortName>
    </alternativeName>
</protein>
<keyword id="KW-0030">Aminoacyl-tRNA synthetase</keyword>
<keyword id="KW-0067">ATP-binding</keyword>
<keyword id="KW-0963">Cytoplasm</keyword>
<keyword id="KW-0436">Ligase</keyword>
<keyword id="KW-0547">Nucleotide-binding</keyword>
<keyword id="KW-0648">Protein biosynthesis</keyword>
<feature type="chain" id="PRO_1000074325" description="Glutamate--tRNA ligase">
    <location>
        <begin position="1"/>
        <end position="480"/>
    </location>
</feature>
<feature type="short sequence motif" description="'HIGH' region" evidence="1">
    <location>
        <begin position="9"/>
        <end position="19"/>
    </location>
</feature>
<feature type="short sequence motif" description="'KMSKS' region" evidence="1">
    <location>
        <begin position="250"/>
        <end position="254"/>
    </location>
</feature>
<feature type="binding site" evidence="1">
    <location>
        <position position="253"/>
    </location>
    <ligand>
        <name>ATP</name>
        <dbReference type="ChEBI" id="CHEBI:30616"/>
    </ligand>
</feature>
<dbReference type="EC" id="6.1.1.17" evidence="1"/>
<dbReference type="EMBL" id="AP009552">
    <property type="protein sequence ID" value="BAG05091.1"/>
    <property type="molecule type" value="Genomic_DNA"/>
</dbReference>
<dbReference type="RefSeq" id="WP_012267638.1">
    <property type="nucleotide sequence ID" value="NC_010296.1"/>
</dbReference>
<dbReference type="SMR" id="B0JY53"/>
<dbReference type="STRING" id="449447.MAE_52690"/>
<dbReference type="PaxDb" id="449447-MAE_52690"/>
<dbReference type="EnsemblBacteria" id="BAG05091">
    <property type="protein sequence ID" value="BAG05091"/>
    <property type="gene ID" value="MAE_52690"/>
</dbReference>
<dbReference type="KEGG" id="mar:MAE_52690"/>
<dbReference type="PATRIC" id="fig|449447.4.peg.4802"/>
<dbReference type="eggNOG" id="COG0008">
    <property type="taxonomic scope" value="Bacteria"/>
</dbReference>
<dbReference type="HOGENOM" id="CLU_015768_6_0_3"/>
<dbReference type="BioCyc" id="MAER449447:MAE_RS22920-MONOMER"/>
<dbReference type="Proteomes" id="UP000001510">
    <property type="component" value="Chromosome"/>
</dbReference>
<dbReference type="GO" id="GO:0005829">
    <property type="term" value="C:cytosol"/>
    <property type="evidence" value="ECO:0007669"/>
    <property type="project" value="TreeGrafter"/>
</dbReference>
<dbReference type="GO" id="GO:0005524">
    <property type="term" value="F:ATP binding"/>
    <property type="evidence" value="ECO:0007669"/>
    <property type="project" value="UniProtKB-UniRule"/>
</dbReference>
<dbReference type="GO" id="GO:0004818">
    <property type="term" value="F:glutamate-tRNA ligase activity"/>
    <property type="evidence" value="ECO:0007669"/>
    <property type="project" value="UniProtKB-UniRule"/>
</dbReference>
<dbReference type="GO" id="GO:0000049">
    <property type="term" value="F:tRNA binding"/>
    <property type="evidence" value="ECO:0007669"/>
    <property type="project" value="InterPro"/>
</dbReference>
<dbReference type="GO" id="GO:0008270">
    <property type="term" value="F:zinc ion binding"/>
    <property type="evidence" value="ECO:0007669"/>
    <property type="project" value="InterPro"/>
</dbReference>
<dbReference type="GO" id="GO:0006424">
    <property type="term" value="P:glutamyl-tRNA aminoacylation"/>
    <property type="evidence" value="ECO:0007669"/>
    <property type="project" value="UniProtKB-UniRule"/>
</dbReference>
<dbReference type="CDD" id="cd00808">
    <property type="entry name" value="GluRS_core"/>
    <property type="match status" value="1"/>
</dbReference>
<dbReference type="FunFam" id="3.40.50.620:FF:000007">
    <property type="entry name" value="Glutamate--tRNA ligase"/>
    <property type="match status" value="1"/>
</dbReference>
<dbReference type="Gene3D" id="1.10.10.350">
    <property type="match status" value="1"/>
</dbReference>
<dbReference type="Gene3D" id="1.10.8.70">
    <property type="entry name" value="Glutamate-tRNA synthetase, class I, anticodon-binding domain 1"/>
    <property type="match status" value="1"/>
</dbReference>
<dbReference type="Gene3D" id="1.10.1160.10">
    <property type="entry name" value="Glutamyl-trna Synthetase, Domain 2"/>
    <property type="match status" value="1"/>
</dbReference>
<dbReference type="Gene3D" id="3.90.800.10">
    <property type="entry name" value="Glutamyl-tRNA Synthetase, Domain 3"/>
    <property type="match status" value="1"/>
</dbReference>
<dbReference type="Gene3D" id="3.40.50.620">
    <property type="entry name" value="HUPs"/>
    <property type="match status" value="1"/>
</dbReference>
<dbReference type="HAMAP" id="MF_00022">
    <property type="entry name" value="Glu_tRNA_synth_type1"/>
    <property type="match status" value="1"/>
</dbReference>
<dbReference type="InterPro" id="IPR045462">
    <property type="entry name" value="aa-tRNA-synth_I_cd-bd"/>
</dbReference>
<dbReference type="InterPro" id="IPR020751">
    <property type="entry name" value="aa-tRNA-synth_I_codon-bd_sub2"/>
</dbReference>
<dbReference type="InterPro" id="IPR001412">
    <property type="entry name" value="aa-tRNA-synth_I_CS"/>
</dbReference>
<dbReference type="InterPro" id="IPR008925">
    <property type="entry name" value="aa_tRNA-synth_I_cd-bd_sf"/>
</dbReference>
<dbReference type="InterPro" id="IPR004527">
    <property type="entry name" value="Glu-tRNA-ligase_bac/mito"/>
</dbReference>
<dbReference type="InterPro" id="IPR020752">
    <property type="entry name" value="Glu-tRNA-synth_I_codon-bd_sub1"/>
</dbReference>
<dbReference type="InterPro" id="IPR000924">
    <property type="entry name" value="Glu/Gln-tRNA-synth"/>
</dbReference>
<dbReference type="InterPro" id="IPR020058">
    <property type="entry name" value="Glu/Gln-tRNA-synth_Ib_cat-dom"/>
</dbReference>
<dbReference type="InterPro" id="IPR020061">
    <property type="entry name" value="Glu_tRNA_lig_a-bdl"/>
</dbReference>
<dbReference type="InterPro" id="IPR049940">
    <property type="entry name" value="GluQ/Sye"/>
</dbReference>
<dbReference type="InterPro" id="IPR033910">
    <property type="entry name" value="GluRS_core"/>
</dbReference>
<dbReference type="InterPro" id="IPR014729">
    <property type="entry name" value="Rossmann-like_a/b/a_fold"/>
</dbReference>
<dbReference type="NCBIfam" id="TIGR00464">
    <property type="entry name" value="gltX_bact"/>
    <property type="match status" value="1"/>
</dbReference>
<dbReference type="PANTHER" id="PTHR43311">
    <property type="entry name" value="GLUTAMATE--TRNA LIGASE"/>
    <property type="match status" value="1"/>
</dbReference>
<dbReference type="PANTHER" id="PTHR43311:SF2">
    <property type="entry name" value="GLUTAMATE--TRNA LIGASE, MITOCHONDRIAL-RELATED"/>
    <property type="match status" value="1"/>
</dbReference>
<dbReference type="Pfam" id="PF19269">
    <property type="entry name" value="Anticodon_2"/>
    <property type="match status" value="1"/>
</dbReference>
<dbReference type="Pfam" id="PF00749">
    <property type="entry name" value="tRNA-synt_1c"/>
    <property type="match status" value="1"/>
</dbReference>
<dbReference type="PRINTS" id="PR00987">
    <property type="entry name" value="TRNASYNTHGLU"/>
</dbReference>
<dbReference type="SUPFAM" id="SSF48163">
    <property type="entry name" value="An anticodon-binding domain of class I aminoacyl-tRNA synthetases"/>
    <property type="match status" value="1"/>
</dbReference>
<dbReference type="SUPFAM" id="SSF52374">
    <property type="entry name" value="Nucleotidylyl transferase"/>
    <property type="match status" value="1"/>
</dbReference>
<dbReference type="PROSITE" id="PS00178">
    <property type="entry name" value="AA_TRNA_LIGASE_I"/>
    <property type="match status" value="1"/>
</dbReference>
<proteinExistence type="inferred from homology"/>
<accession>B0JY53</accession>
<reference key="1">
    <citation type="journal article" date="2007" name="DNA Res.">
        <title>Complete genomic structure of the bloom-forming toxic cyanobacterium Microcystis aeruginosa NIES-843.</title>
        <authorList>
            <person name="Kaneko T."/>
            <person name="Nakajima N."/>
            <person name="Okamoto S."/>
            <person name="Suzuki I."/>
            <person name="Tanabe Y."/>
            <person name="Tamaoki M."/>
            <person name="Nakamura Y."/>
            <person name="Kasai F."/>
            <person name="Watanabe A."/>
            <person name="Kawashima K."/>
            <person name="Kishida Y."/>
            <person name="Ono A."/>
            <person name="Shimizu Y."/>
            <person name="Takahashi C."/>
            <person name="Minami C."/>
            <person name="Fujishiro T."/>
            <person name="Kohara M."/>
            <person name="Katoh M."/>
            <person name="Nakazaki N."/>
            <person name="Nakayama S."/>
            <person name="Yamada M."/>
            <person name="Tabata S."/>
            <person name="Watanabe M.M."/>
        </authorList>
    </citation>
    <scope>NUCLEOTIDE SEQUENCE [LARGE SCALE GENOMIC DNA]</scope>
    <source>
        <strain>NIES-843 / IAM M-247</strain>
    </source>
</reference>
<evidence type="ECO:0000255" key="1">
    <source>
        <dbReference type="HAMAP-Rule" id="MF_00022"/>
    </source>
</evidence>